<protein>
    <recommendedName>
        <fullName evidence="6 7">(R)-phenyllactyl-CoA dehydratase alpha subunit</fullName>
        <ecNumber evidence="1 7">4.2.1.175</ecNumber>
    </recommendedName>
</protein>
<keyword id="KW-0004">4Fe-4S</keyword>
<keyword id="KW-0903">Direct protein sequencing</keyword>
<keyword id="KW-0408">Iron</keyword>
<keyword id="KW-0411">Iron-sulfur</keyword>
<keyword id="KW-0456">Lyase</keyword>
<keyword id="KW-0479">Metal-binding</keyword>
<proteinExistence type="evidence at protein level"/>
<feature type="propeptide" id="PRO_0000423003" evidence="1">
    <location>
        <begin position="1"/>
        <end position="4"/>
    </location>
</feature>
<feature type="chain" id="PRO_0000423004" description="(R)-phenyllactyl-CoA dehydratase alpha subunit">
    <location>
        <begin position="5"/>
        <end position="407"/>
    </location>
</feature>
<gene>
    <name evidence="3 4" type="primary">fldB</name>
</gene>
<comment type="function">
    <text evidence="1 2">Component of the phenyllactate dehydratase complex FldABC that is involved in the fermentation of L-phenylalanine via a Stickland reaction. This complex catalyzes the reversible syn-dehydration of (R)-phenyllactate to (E)-cinnamate in two steps, a CoA-transfer from cinnamoyl-CoA to phenyllactate, catalyzed by FldA, followed by the dehydration of phenyllactyl-CoA to cinnamoyl-CoA, catalyzed by FldB and FldC. Requires the activator FldI to initiate catalysis.</text>
</comment>
<comment type="catalytic activity">
    <reaction evidence="1 7">
        <text>(R)-3-phenyllactoyl-CoA = (E)-cinnamoyl-CoA + H2O</text>
        <dbReference type="Rhea" id="RHEA:38355"/>
        <dbReference type="ChEBI" id="CHEBI:15377"/>
        <dbReference type="ChEBI" id="CHEBI:57252"/>
        <dbReference type="ChEBI" id="CHEBI:57254"/>
        <dbReference type="EC" id="4.2.1.175"/>
    </reaction>
</comment>
<comment type="catalytic activity">
    <reaction evidence="1 7">
        <text>(R)-3-(4-hydroxyphenyl)lactoyl-CoA = (E)-4-coumaroyl-CoA + H2O</text>
        <dbReference type="Rhea" id="RHEA:60108"/>
        <dbReference type="ChEBI" id="CHEBI:15377"/>
        <dbReference type="ChEBI" id="CHEBI:85008"/>
        <dbReference type="ChEBI" id="CHEBI:143007"/>
        <dbReference type="EC" id="4.2.1.175"/>
    </reaction>
</comment>
<comment type="catalytic activity">
    <reaction evidence="1 7">
        <text>(R)-3-(indol-3-yl)lactoyl-CoA = (E)-3-(indol-3-yl)acryloyl-CoA + H2O</text>
        <dbReference type="Rhea" id="RHEA:60112"/>
        <dbReference type="ChEBI" id="CHEBI:15377"/>
        <dbReference type="ChEBI" id="CHEBI:143008"/>
        <dbReference type="ChEBI" id="CHEBI:143009"/>
        <dbReference type="EC" id="4.2.1.175"/>
    </reaction>
</comment>
<comment type="cofactor">
    <cofactor evidence="1 7">
        <name>[4Fe-4S] cluster</name>
        <dbReference type="ChEBI" id="CHEBI:49883"/>
    </cofactor>
    <text evidence="1">Appears to contain about 1 [4Fe-4S] cluster per heterodimer FldBC.</text>
</comment>
<comment type="cofactor">
    <text evidence="2">No flavin could be detected in the FldABC complex, and the addition of FAD, FMN or riboflavin to the dehydratase do not increase enzymatic activity.</text>
</comment>
<comment type="biophysicochemical properties">
    <kinetics>
        <KM evidence="2">5 uM for cinnamoyl-CoA (at pH 8 and 20 degrees Celsius)</KM>
        <text evidence="2">kcat is 1 sec(-1) (at pH 8 and 20 degrees Celsius). Values have been measured with the FldABC complex.</text>
    </kinetics>
</comment>
<comment type="pathway">
    <text evidence="6">Amino-acid degradation; L-phenylalanine degradation.</text>
</comment>
<comment type="subunit">
    <text evidence="1 2">Part of the heterotrimeric phenyllactate dehydratase complex FldABC, composed of (R)-phenyllactate CoA-transferase (FldA) and a heterodimeric (R)-phenyllactyl-CoA dehydratase (FldB and FldC).</text>
</comment>
<comment type="mass spectrometry" mass="45490.0" method="MALDI" evidence="1">
    <text>Apparently, about six amino acids are lost during post-translational modification. This result agrees in part with the chemically determined N-terminus, though of bad quality, which starts with the fifth amino acid.</text>
</comment>
<comment type="similarity">
    <text evidence="5">Belongs to the FldB/FldC dehydratase alpha/beta subunit family.</text>
</comment>
<organism>
    <name type="scientific">Clostridium sporogenes</name>
    <dbReference type="NCBI Taxonomy" id="1509"/>
    <lineage>
        <taxon>Bacteria</taxon>
        <taxon>Bacillati</taxon>
        <taxon>Bacillota</taxon>
        <taxon>Clostridia</taxon>
        <taxon>Eubacteriales</taxon>
        <taxon>Clostridiaceae</taxon>
        <taxon>Clostridium</taxon>
    </lineage>
</organism>
<reference key="1">
    <citation type="journal article" date="2002" name="Mol. Microbiol.">
        <title>Molecular characterization of phenyllactate dehydratase and its initiator from Clostridium sporogenes.</title>
        <authorList>
            <person name="Dickert S."/>
            <person name="Pierik A.J."/>
            <person name="Buckel W."/>
        </authorList>
    </citation>
    <scope>NUCLEOTIDE SEQUENCE [GENOMIC DNA]</scope>
    <scope>FUNCTION</scope>
    <scope>CATALYTIC ACTIVITY</scope>
    <scope>BIOPHYSICOCHEMICAL PROPERTIES</scope>
    <scope>SUBUNIT</scope>
    <scope>COFACTOR</scope>
    <source>
        <strain>ATCC 3584</strain>
    </source>
</reference>
<reference key="2">
    <citation type="journal article" date="2000" name="Eur. J. Biochem.">
        <title>The involvement of coenzyme A esters in the dehydration of (R)-phenyllactate to (E)-cinnamate by Clostridium sporogenes.</title>
        <authorList>
            <person name="Dickert S."/>
            <person name="Pierik A.J."/>
            <person name="Linder D."/>
            <person name="Buckel W."/>
        </authorList>
    </citation>
    <scope>PROTEIN SEQUENCE OF 5-24</scope>
    <scope>FUNCTION</scope>
    <scope>CATALYTIC ACTIVITY</scope>
    <scope>COFACTOR</scope>
    <scope>MASS SPECTROMETRY</scope>
    <scope>SUBUNIT</scope>
    <scope>PATHWAY</scope>
    <source>
        <strain>ATCC 3584</strain>
    </source>
</reference>
<dbReference type="EC" id="4.2.1.175" evidence="1 7"/>
<dbReference type="EMBL" id="AF420489">
    <property type="protein sequence ID" value="AAL18810.1"/>
    <property type="molecule type" value="Genomic_DNA"/>
</dbReference>
<dbReference type="RefSeq" id="WP_003492352.1">
    <property type="nucleotide sequence ID" value="NZ_WTFE01000008.1"/>
</dbReference>
<dbReference type="SMR" id="Q93AL9"/>
<dbReference type="GeneID" id="92940029"/>
<dbReference type="BioCyc" id="MetaCyc:MONOMER-20597"/>
<dbReference type="BRENDA" id="4.2.1.175">
    <property type="organism ID" value="1517"/>
</dbReference>
<dbReference type="UniPathway" id="UPA00139"/>
<dbReference type="GO" id="GO:0051539">
    <property type="term" value="F:4 iron, 4 sulfur cluster binding"/>
    <property type="evidence" value="ECO:0007669"/>
    <property type="project" value="UniProtKB-KW"/>
</dbReference>
<dbReference type="GO" id="GO:0016836">
    <property type="term" value="F:hydro-lyase activity"/>
    <property type="evidence" value="ECO:0000314"/>
    <property type="project" value="UniProtKB"/>
</dbReference>
<dbReference type="GO" id="GO:0046872">
    <property type="term" value="F:metal ion binding"/>
    <property type="evidence" value="ECO:0007669"/>
    <property type="project" value="UniProtKB-KW"/>
</dbReference>
<dbReference type="GO" id="GO:0006559">
    <property type="term" value="P:L-phenylalanine catabolic process"/>
    <property type="evidence" value="ECO:0007669"/>
    <property type="project" value="UniProtKB-UniPathway"/>
</dbReference>
<dbReference type="GO" id="GO:0006558">
    <property type="term" value="P:L-phenylalanine metabolic process"/>
    <property type="evidence" value="ECO:0000314"/>
    <property type="project" value="UniProtKB"/>
</dbReference>
<dbReference type="Gene3D" id="3.40.50.11890">
    <property type="match status" value="1"/>
</dbReference>
<dbReference type="Gene3D" id="3.40.50.11900">
    <property type="match status" value="1"/>
</dbReference>
<dbReference type="InterPro" id="IPR010327">
    <property type="entry name" value="FldB/FldC_alpha/beta"/>
</dbReference>
<dbReference type="PANTHER" id="PTHR30548">
    <property type="entry name" value="2-HYDROXYGLUTARYL-COA DEHYDRATASE, D-COMPONENT-RELATED"/>
    <property type="match status" value="1"/>
</dbReference>
<dbReference type="PANTHER" id="PTHR30548:SF4">
    <property type="entry name" value="SUBUNIT OF OXYGEN-SENSITIVE 2-HYDROXYISOCAPROYL-COA DEHYDRATASE"/>
    <property type="match status" value="1"/>
</dbReference>
<dbReference type="Pfam" id="PF06050">
    <property type="entry name" value="HGD-D"/>
    <property type="match status" value="1"/>
</dbReference>
<accession>Q93AL9</accession>
<evidence type="ECO:0000269" key="1">
    <source>
    </source>
</evidence>
<evidence type="ECO:0000269" key="2">
    <source>
    </source>
</evidence>
<evidence type="ECO:0000303" key="3">
    <source>
    </source>
</evidence>
<evidence type="ECO:0000303" key="4">
    <source>
    </source>
</evidence>
<evidence type="ECO:0000305" key="5"/>
<evidence type="ECO:0000305" key="6">
    <source>
    </source>
</evidence>
<evidence type="ECO:0000305" key="7">
    <source>
    </source>
</evidence>
<name>FLDB_CLOSG</name>
<sequence length="407" mass="46238">MSDRNKEVKEKKAKHYLREITAKHYKEALEAKERGEKVGWCASNFPQEIATTLGVKVVYPENHAAAVAARGNGQNMCEHAEAMGFSNDVCGYARVNLAVMDIGHSEDQPIPMPDFVLCCNNICNQMIKWYEHIAKTLDIPMILIDIPYNTENTVSQDRIKYIRAQFDDAIKQLEEITGKKWDENKFEEVMKISQESAKQWLRAASYAKYKPSPFSGFDLFNHMAVAVCARGTQEAADAFKMLADEYEENVKTGKSTYRGEEKQRILFEGIACWPYLRHKLTKLSEYGMNVTATVYAEAFGVIYENMDELMAAYNKVPNSISFENALKMRLNAVTSTNTEGAVIHINRSCKLWSGFLYELARRLEKETGIPVVSFDGDQADPRNFSEAQYDTRIQGLNEVMVAKKEAE</sequence>